<name>MURD_BACVZ</name>
<accession>A7Z4E3</accession>
<dbReference type="EC" id="6.3.2.9" evidence="1"/>
<dbReference type="EMBL" id="CP000560">
    <property type="protein sequence ID" value="ABS73869.1"/>
    <property type="molecule type" value="Genomic_DNA"/>
</dbReference>
<dbReference type="RefSeq" id="WP_012117504.1">
    <property type="nucleotide sequence ID" value="NC_009725.2"/>
</dbReference>
<dbReference type="SMR" id="A7Z4E3"/>
<dbReference type="GeneID" id="93080639"/>
<dbReference type="KEGG" id="bay:RBAM_015060"/>
<dbReference type="HOGENOM" id="CLU_032540_0_1_9"/>
<dbReference type="UniPathway" id="UPA00219"/>
<dbReference type="Proteomes" id="UP000001120">
    <property type="component" value="Chromosome"/>
</dbReference>
<dbReference type="GO" id="GO:0005737">
    <property type="term" value="C:cytoplasm"/>
    <property type="evidence" value="ECO:0007669"/>
    <property type="project" value="UniProtKB-SubCell"/>
</dbReference>
<dbReference type="GO" id="GO:0005524">
    <property type="term" value="F:ATP binding"/>
    <property type="evidence" value="ECO:0007669"/>
    <property type="project" value="UniProtKB-UniRule"/>
</dbReference>
<dbReference type="GO" id="GO:0008764">
    <property type="term" value="F:UDP-N-acetylmuramoylalanine-D-glutamate ligase activity"/>
    <property type="evidence" value="ECO:0007669"/>
    <property type="project" value="UniProtKB-UniRule"/>
</dbReference>
<dbReference type="GO" id="GO:0051301">
    <property type="term" value="P:cell division"/>
    <property type="evidence" value="ECO:0007669"/>
    <property type="project" value="UniProtKB-KW"/>
</dbReference>
<dbReference type="GO" id="GO:0071555">
    <property type="term" value="P:cell wall organization"/>
    <property type="evidence" value="ECO:0007669"/>
    <property type="project" value="UniProtKB-KW"/>
</dbReference>
<dbReference type="GO" id="GO:0009252">
    <property type="term" value="P:peptidoglycan biosynthetic process"/>
    <property type="evidence" value="ECO:0007669"/>
    <property type="project" value="UniProtKB-UniRule"/>
</dbReference>
<dbReference type="GO" id="GO:0008360">
    <property type="term" value="P:regulation of cell shape"/>
    <property type="evidence" value="ECO:0007669"/>
    <property type="project" value="UniProtKB-KW"/>
</dbReference>
<dbReference type="Gene3D" id="3.90.190.20">
    <property type="entry name" value="Mur ligase, C-terminal domain"/>
    <property type="match status" value="1"/>
</dbReference>
<dbReference type="Gene3D" id="3.40.1190.10">
    <property type="entry name" value="Mur-like, catalytic domain"/>
    <property type="match status" value="1"/>
</dbReference>
<dbReference type="Gene3D" id="3.40.50.720">
    <property type="entry name" value="NAD(P)-binding Rossmann-like Domain"/>
    <property type="match status" value="1"/>
</dbReference>
<dbReference type="HAMAP" id="MF_00639">
    <property type="entry name" value="MurD"/>
    <property type="match status" value="1"/>
</dbReference>
<dbReference type="InterPro" id="IPR036565">
    <property type="entry name" value="Mur-like_cat_sf"/>
</dbReference>
<dbReference type="InterPro" id="IPR004101">
    <property type="entry name" value="Mur_ligase_C"/>
</dbReference>
<dbReference type="InterPro" id="IPR036615">
    <property type="entry name" value="Mur_ligase_C_dom_sf"/>
</dbReference>
<dbReference type="InterPro" id="IPR013221">
    <property type="entry name" value="Mur_ligase_cen"/>
</dbReference>
<dbReference type="InterPro" id="IPR005762">
    <property type="entry name" value="MurD"/>
</dbReference>
<dbReference type="NCBIfam" id="TIGR01087">
    <property type="entry name" value="murD"/>
    <property type="match status" value="1"/>
</dbReference>
<dbReference type="PANTHER" id="PTHR43692">
    <property type="entry name" value="UDP-N-ACETYLMURAMOYLALANINE--D-GLUTAMATE LIGASE"/>
    <property type="match status" value="1"/>
</dbReference>
<dbReference type="PANTHER" id="PTHR43692:SF1">
    <property type="entry name" value="UDP-N-ACETYLMURAMOYLALANINE--D-GLUTAMATE LIGASE"/>
    <property type="match status" value="1"/>
</dbReference>
<dbReference type="Pfam" id="PF02875">
    <property type="entry name" value="Mur_ligase_C"/>
    <property type="match status" value="1"/>
</dbReference>
<dbReference type="Pfam" id="PF08245">
    <property type="entry name" value="Mur_ligase_M"/>
    <property type="match status" value="1"/>
</dbReference>
<dbReference type="Pfam" id="PF21799">
    <property type="entry name" value="MurD-like_N"/>
    <property type="match status" value="1"/>
</dbReference>
<dbReference type="SUPFAM" id="SSF51984">
    <property type="entry name" value="MurCD N-terminal domain"/>
    <property type="match status" value="1"/>
</dbReference>
<dbReference type="SUPFAM" id="SSF53623">
    <property type="entry name" value="MurD-like peptide ligases, catalytic domain"/>
    <property type="match status" value="1"/>
</dbReference>
<dbReference type="SUPFAM" id="SSF53244">
    <property type="entry name" value="MurD-like peptide ligases, peptide-binding domain"/>
    <property type="match status" value="1"/>
</dbReference>
<reference key="1">
    <citation type="journal article" date="2007" name="Nat. Biotechnol.">
        <title>Comparative analysis of the complete genome sequence of the plant growth-promoting bacterium Bacillus amyloliquefaciens FZB42.</title>
        <authorList>
            <person name="Chen X.H."/>
            <person name="Koumoutsi A."/>
            <person name="Scholz R."/>
            <person name="Eisenreich A."/>
            <person name="Schneider K."/>
            <person name="Heinemeyer I."/>
            <person name="Morgenstern B."/>
            <person name="Voss B."/>
            <person name="Hess W.R."/>
            <person name="Reva O."/>
            <person name="Junge H."/>
            <person name="Voigt B."/>
            <person name="Jungblut P.R."/>
            <person name="Vater J."/>
            <person name="Suessmuth R."/>
            <person name="Liesegang H."/>
            <person name="Strittmatter A."/>
            <person name="Gottschalk G."/>
            <person name="Borriss R."/>
        </authorList>
    </citation>
    <scope>NUCLEOTIDE SEQUENCE [LARGE SCALE GENOMIC DNA]</scope>
    <source>
        <strain>DSM 23117 / BGSC 10A6 / LMG 26770 / FZB42</strain>
    </source>
</reference>
<protein>
    <recommendedName>
        <fullName evidence="1">UDP-N-acetylmuramoylalanine--D-glutamate ligase</fullName>
        <ecNumber evidence="1">6.3.2.9</ecNumber>
    </recommendedName>
    <alternativeName>
        <fullName evidence="1">D-glutamic acid-adding enzyme</fullName>
    </alternativeName>
    <alternativeName>
        <fullName evidence="1">UDP-N-acetylmuramoyl-L-alanyl-D-glutamate synthetase</fullName>
    </alternativeName>
</protein>
<organism>
    <name type="scientific">Bacillus velezensis (strain DSM 23117 / BGSC 10A6 / LMG 26770 / FZB42)</name>
    <name type="common">Bacillus amyloliquefaciens subsp. plantarum</name>
    <dbReference type="NCBI Taxonomy" id="326423"/>
    <lineage>
        <taxon>Bacteria</taxon>
        <taxon>Bacillati</taxon>
        <taxon>Bacillota</taxon>
        <taxon>Bacilli</taxon>
        <taxon>Bacillales</taxon>
        <taxon>Bacillaceae</taxon>
        <taxon>Bacillus</taxon>
        <taxon>Bacillus amyloliquefaciens group</taxon>
    </lineage>
</organism>
<evidence type="ECO:0000255" key="1">
    <source>
        <dbReference type="HAMAP-Rule" id="MF_00639"/>
    </source>
</evidence>
<gene>
    <name evidence="1" type="primary">murD</name>
    <name type="ordered locus">RBAM_015060</name>
</gene>
<keyword id="KW-0067">ATP-binding</keyword>
<keyword id="KW-0131">Cell cycle</keyword>
<keyword id="KW-0132">Cell division</keyword>
<keyword id="KW-0133">Cell shape</keyword>
<keyword id="KW-0961">Cell wall biogenesis/degradation</keyword>
<keyword id="KW-0963">Cytoplasm</keyword>
<keyword id="KW-0436">Ligase</keyword>
<keyword id="KW-0547">Nucleotide-binding</keyword>
<keyword id="KW-0573">Peptidoglycan synthesis</keyword>
<feature type="chain" id="PRO_1000056872" description="UDP-N-acetylmuramoylalanine--D-glutamate ligase">
    <location>
        <begin position="1"/>
        <end position="451"/>
    </location>
</feature>
<feature type="binding site" evidence="1">
    <location>
        <begin position="120"/>
        <end position="126"/>
    </location>
    <ligand>
        <name>ATP</name>
        <dbReference type="ChEBI" id="CHEBI:30616"/>
    </ligand>
</feature>
<comment type="function">
    <text evidence="1">Cell wall formation. Catalyzes the addition of glutamate to the nucleotide precursor UDP-N-acetylmuramoyl-L-alanine (UMA).</text>
</comment>
<comment type="catalytic activity">
    <reaction evidence="1">
        <text>UDP-N-acetyl-alpha-D-muramoyl-L-alanine + D-glutamate + ATP = UDP-N-acetyl-alpha-D-muramoyl-L-alanyl-D-glutamate + ADP + phosphate + H(+)</text>
        <dbReference type="Rhea" id="RHEA:16429"/>
        <dbReference type="ChEBI" id="CHEBI:15378"/>
        <dbReference type="ChEBI" id="CHEBI:29986"/>
        <dbReference type="ChEBI" id="CHEBI:30616"/>
        <dbReference type="ChEBI" id="CHEBI:43474"/>
        <dbReference type="ChEBI" id="CHEBI:83898"/>
        <dbReference type="ChEBI" id="CHEBI:83900"/>
        <dbReference type="ChEBI" id="CHEBI:456216"/>
        <dbReference type="EC" id="6.3.2.9"/>
    </reaction>
</comment>
<comment type="pathway">
    <text evidence="1">Cell wall biogenesis; peptidoglycan biosynthesis.</text>
</comment>
<comment type="subcellular location">
    <subcellularLocation>
        <location evidence="1">Cytoplasm</location>
    </subcellularLocation>
</comment>
<comment type="similarity">
    <text evidence="1">Belongs to the MurCDEF family.</text>
</comment>
<sequence>MENELFLQKQNFLVLGLAKSGYAAASILHEKGINVVVNDQKAFEENEPAQRLAERGIEVICGEHPTSLFDQHHITILIKNPGIPYENIMVEEAQRRGIPVWTEIELAYYITNAKFIGITGSNGKTTTTTLIYEMLKADSIKTLIAGNIGTVASEVAYHADGDEWIVTELSSFQLMGTHAFRPEIGLILNVFDAHLDYHHSRENYEKAKQNVYLHQLESDTAIVNQSDETVVRLAESGKAGTVPFSVHQELSSGAFIKDGMLMFGDEAILPVDDIVLPGAHNLENILAAVAAAKTAGASNKAIQKVLTSFTGVKHRLQYVTAIQNRKFYNDSKATNILATSKALSAFKAPVILLAGGLDRGNGFDDLKPYMDNVKAVLTFGQTAPKIEKLGNELGIQHVKRVDNVEQAVSAAFALSNEGDVILLSPACASWDQFKTFEERGDMFIDAVHMLK</sequence>
<proteinExistence type="inferred from homology"/>